<keyword id="KW-0025">Alternative splicing</keyword>
<keyword id="KW-0963">Cytoplasm</keyword>
<keyword id="KW-0206">Cytoskeleton</keyword>
<keyword id="KW-0344">Guanine-nucleotide releasing factor</keyword>
<keyword id="KW-0479">Metal-binding</keyword>
<keyword id="KW-0597">Phosphoprotein</keyword>
<keyword id="KW-1185">Reference proteome</keyword>
<keyword id="KW-0677">Repeat</keyword>
<keyword id="KW-0862">Zinc</keyword>
<keyword id="KW-0863">Zinc-finger</keyword>
<name>FGD3_MOUSE</name>
<evidence type="ECO:0000250" key="1">
    <source>
        <dbReference type="UniProtKB" id="Q5JSP0"/>
    </source>
</evidence>
<evidence type="ECO:0000255" key="2">
    <source>
        <dbReference type="PROSITE-ProRule" id="PRU00062"/>
    </source>
</evidence>
<evidence type="ECO:0000255" key="3">
    <source>
        <dbReference type="PROSITE-ProRule" id="PRU00091"/>
    </source>
</evidence>
<evidence type="ECO:0000255" key="4">
    <source>
        <dbReference type="PROSITE-ProRule" id="PRU00145"/>
    </source>
</evidence>
<evidence type="ECO:0000256" key="5">
    <source>
        <dbReference type="SAM" id="MobiDB-lite"/>
    </source>
</evidence>
<evidence type="ECO:0000269" key="6">
    <source>
    </source>
</evidence>
<evidence type="ECO:0000303" key="7">
    <source>
    </source>
</evidence>
<evidence type="ECO:0000305" key="8"/>
<evidence type="ECO:0007744" key="9">
    <source>
    </source>
</evidence>
<sequence>MELGRSSSTPQEEAISPLGVLGTGPSSSPLGKLQALPIGPGAHRGAHSSSAPAGDSSTREPSGAMKIPNRDSGIDSPSSSVASENFPCEESSEGSPSPAILGLPSETASDSRVPQDNPQEEEDSGVGEEPDPKVTLFRPQEDVSLTQCSDPQKLLHIAQELLHTEEAYVKRLHLLDQVFCTKLTEAGIPLEVTTGIFSNISSIYRFHGQFLLPELQKRITEEWDTNPRLGDILQKLAPFLKMYGEYVKNFDRAMGLVSTWTQRSPQFKDVIHTIQKQEVCGNLTLQHHMLEPVQRVPRYELLLKDYLKRLPRDAPDRKDAERSLELISTAADHSNAAIRKMEKMHKLLEVYEQLGGEEDIVNPANELIKEGSIQKLSAKNGTTQDRHLFLFNNVMLYCVPKLRLMGQKLSVREKMDISDLQVQDIVKPNAACTFIITGRKRSLELQTRTEEEKKEWIQVIQATVEKHKQKSETFRAFGGACSQDEEPTLSPDQPVMSTSSVEPAGVADSNGGTPGIESRKSSSKTRRDKEKPGCKSCGETFNSITKRRYRCKLCGEVICRKCSEFKAENSKQSRVCRECFLEEPLVPPSPSSETPTELKQNAEKPPSVDPRPSLLCGTLNLSDDGTTWNEVWAAIPESDPQVLDLLAGSQAGRLLYSIPLSGCNITMPDPEEGLEAGCAWKLHQGSQTWWLSAPSTKLQQCWLKALGTAVHGDTAGDRPGASQPQAPAGTDTP</sequence>
<proteinExistence type="evidence at protein level"/>
<protein>
    <recommendedName>
        <fullName>FYVE, RhoGEF and PH domain-containing protein 3</fullName>
    </recommendedName>
</protein>
<feature type="chain" id="PRO_0000080945" description="FYVE, RhoGEF and PH domain-containing protein 3">
    <location>
        <begin position="1"/>
        <end position="733"/>
    </location>
</feature>
<feature type="domain" description="DH" evidence="2">
    <location>
        <begin position="153"/>
        <end position="337"/>
    </location>
</feature>
<feature type="domain" description="PH 1" evidence="4">
    <location>
        <begin position="366"/>
        <end position="465"/>
    </location>
</feature>
<feature type="domain" description="PH 2" evidence="4">
    <location>
        <begin position="612"/>
        <end position="711"/>
    </location>
</feature>
<feature type="zinc finger region" description="FYVE-type" evidence="3">
    <location>
        <begin position="528"/>
        <end position="584"/>
    </location>
</feature>
<feature type="region of interest" description="Disordered" evidence="5">
    <location>
        <begin position="1"/>
        <end position="134"/>
    </location>
</feature>
<feature type="region of interest" description="Disordered" evidence="5">
    <location>
        <begin position="481"/>
        <end position="535"/>
    </location>
</feature>
<feature type="region of interest" description="Disordered" evidence="5">
    <location>
        <begin position="586"/>
        <end position="612"/>
    </location>
</feature>
<feature type="region of interest" description="Disordered" evidence="5">
    <location>
        <begin position="712"/>
        <end position="733"/>
    </location>
</feature>
<feature type="compositionally biased region" description="Polar residues" evidence="5">
    <location>
        <begin position="1"/>
        <end position="11"/>
    </location>
</feature>
<feature type="compositionally biased region" description="Polar residues" evidence="5">
    <location>
        <begin position="47"/>
        <end position="60"/>
    </location>
</feature>
<feature type="compositionally biased region" description="Polar residues" evidence="5">
    <location>
        <begin position="106"/>
        <end position="117"/>
    </location>
</feature>
<feature type="compositionally biased region" description="Acidic residues" evidence="5">
    <location>
        <begin position="118"/>
        <end position="129"/>
    </location>
</feature>
<feature type="compositionally biased region" description="Basic and acidic residues" evidence="5">
    <location>
        <begin position="517"/>
        <end position="533"/>
    </location>
</feature>
<feature type="binding site" evidence="3">
    <location>
        <position position="534"/>
    </location>
    <ligand>
        <name>Zn(2+)</name>
        <dbReference type="ChEBI" id="CHEBI:29105"/>
        <label>1</label>
    </ligand>
</feature>
<feature type="binding site" evidence="3">
    <location>
        <position position="537"/>
    </location>
    <ligand>
        <name>Zn(2+)</name>
        <dbReference type="ChEBI" id="CHEBI:29105"/>
        <label>1</label>
    </ligand>
</feature>
<feature type="binding site" evidence="3">
    <location>
        <position position="551"/>
    </location>
    <ligand>
        <name>Zn(2+)</name>
        <dbReference type="ChEBI" id="CHEBI:29105"/>
        <label>2</label>
    </ligand>
</feature>
<feature type="binding site" evidence="3">
    <location>
        <position position="554"/>
    </location>
    <ligand>
        <name>Zn(2+)</name>
        <dbReference type="ChEBI" id="CHEBI:29105"/>
        <label>2</label>
    </ligand>
</feature>
<feature type="binding site" evidence="3">
    <location>
        <position position="559"/>
    </location>
    <ligand>
        <name>Zn(2+)</name>
        <dbReference type="ChEBI" id="CHEBI:29105"/>
        <label>1</label>
    </ligand>
</feature>
<feature type="binding site" evidence="3">
    <location>
        <position position="562"/>
    </location>
    <ligand>
        <name>Zn(2+)</name>
        <dbReference type="ChEBI" id="CHEBI:29105"/>
        <label>1</label>
    </ligand>
</feature>
<feature type="binding site" evidence="3">
    <location>
        <position position="576"/>
    </location>
    <ligand>
        <name>Zn(2+)</name>
        <dbReference type="ChEBI" id="CHEBI:29105"/>
        <label>2</label>
    </ligand>
</feature>
<feature type="binding site" evidence="3">
    <location>
        <position position="579"/>
    </location>
    <ligand>
        <name>Zn(2+)</name>
        <dbReference type="ChEBI" id="CHEBI:29105"/>
        <label>2</label>
    </ligand>
</feature>
<feature type="modified residue" description="Phosphoserine" evidence="1">
    <location>
        <position position="124"/>
    </location>
</feature>
<feature type="modified residue" description="Phosphothreonine" evidence="9">
    <location>
        <position position="732"/>
    </location>
</feature>
<feature type="splice variant" id="VSP_013076" description="In isoform 2." evidence="7">
    <original>IESRKSSSKTRRDKEKP</original>
    <variation>VSDPHPGISRSERCLGR</variation>
    <location>
        <begin position="516"/>
        <end position="532"/>
    </location>
</feature>
<feature type="splice variant" id="VSP_013077" description="In isoform 2." evidence="7">
    <location>
        <begin position="533"/>
        <end position="733"/>
    </location>
</feature>
<feature type="sequence conflict" description="In Ref. 2; BAC34624." evidence="8" ref="2">
    <original>S</original>
    <variation>P</variation>
    <location>
        <position position="7"/>
    </location>
</feature>
<feature type="sequence conflict" description="In Ref. 2; BAC34624." evidence="8" ref="2">
    <original>V</original>
    <variation>M</variation>
    <location>
        <position position="126"/>
    </location>
</feature>
<reference key="1">
    <citation type="journal article" date="2000" name="Gene">
        <title>Isolation, characterization, and mapping of the mouse Fgd3 gene, a new faciogenital dysplasia (FGD1; Aarskog syndrome) gene homologue.</title>
        <authorList>
            <person name="Pasteris N.G."/>
            <person name="Nagata K."/>
            <person name="Hall A."/>
            <person name="Gorski J.L."/>
        </authorList>
    </citation>
    <scope>NUCLEOTIDE SEQUENCE [MRNA] (ISOFORM 1)</scope>
    <scope>FUNCTION</scope>
    <scope>TISSUE SPECIFICITY</scope>
    <source>
        <tissue>Spleen</tissue>
    </source>
</reference>
<reference key="2">
    <citation type="journal article" date="2005" name="Science">
        <title>The transcriptional landscape of the mammalian genome.</title>
        <authorList>
            <person name="Carninci P."/>
            <person name="Kasukawa T."/>
            <person name="Katayama S."/>
            <person name="Gough J."/>
            <person name="Frith M.C."/>
            <person name="Maeda N."/>
            <person name="Oyama R."/>
            <person name="Ravasi T."/>
            <person name="Lenhard B."/>
            <person name="Wells C."/>
            <person name="Kodzius R."/>
            <person name="Shimokawa K."/>
            <person name="Bajic V.B."/>
            <person name="Brenner S.E."/>
            <person name="Batalov S."/>
            <person name="Forrest A.R."/>
            <person name="Zavolan M."/>
            <person name="Davis M.J."/>
            <person name="Wilming L.G."/>
            <person name="Aidinis V."/>
            <person name="Allen J.E."/>
            <person name="Ambesi-Impiombato A."/>
            <person name="Apweiler R."/>
            <person name="Aturaliya R.N."/>
            <person name="Bailey T.L."/>
            <person name="Bansal M."/>
            <person name="Baxter L."/>
            <person name="Beisel K.W."/>
            <person name="Bersano T."/>
            <person name="Bono H."/>
            <person name="Chalk A.M."/>
            <person name="Chiu K.P."/>
            <person name="Choudhary V."/>
            <person name="Christoffels A."/>
            <person name="Clutterbuck D.R."/>
            <person name="Crowe M.L."/>
            <person name="Dalla E."/>
            <person name="Dalrymple B.P."/>
            <person name="de Bono B."/>
            <person name="Della Gatta G."/>
            <person name="di Bernardo D."/>
            <person name="Down T."/>
            <person name="Engstrom P."/>
            <person name="Fagiolini M."/>
            <person name="Faulkner G."/>
            <person name="Fletcher C.F."/>
            <person name="Fukushima T."/>
            <person name="Furuno M."/>
            <person name="Futaki S."/>
            <person name="Gariboldi M."/>
            <person name="Georgii-Hemming P."/>
            <person name="Gingeras T.R."/>
            <person name="Gojobori T."/>
            <person name="Green R.E."/>
            <person name="Gustincich S."/>
            <person name="Harbers M."/>
            <person name="Hayashi Y."/>
            <person name="Hensch T.K."/>
            <person name="Hirokawa N."/>
            <person name="Hill D."/>
            <person name="Huminiecki L."/>
            <person name="Iacono M."/>
            <person name="Ikeo K."/>
            <person name="Iwama A."/>
            <person name="Ishikawa T."/>
            <person name="Jakt M."/>
            <person name="Kanapin A."/>
            <person name="Katoh M."/>
            <person name="Kawasawa Y."/>
            <person name="Kelso J."/>
            <person name="Kitamura H."/>
            <person name="Kitano H."/>
            <person name="Kollias G."/>
            <person name="Krishnan S.P."/>
            <person name="Kruger A."/>
            <person name="Kummerfeld S.K."/>
            <person name="Kurochkin I.V."/>
            <person name="Lareau L.F."/>
            <person name="Lazarevic D."/>
            <person name="Lipovich L."/>
            <person name="Liu J."/>
            <person name="Liuni S."/>
            <person name="McWilliam S."/>
            <person name="Madan Babu M."/>
            <person name="Madera M."/>
            <person name="Marchionni L."/>
            <person name="Matsuda H."/>
            <person name="Matsuzawa S."/>
            <person name="Miki H."/>
            <person name="Mignone F."/>
            <person name="Miyake S."/>
            <person name="Morris K."/>
            <person name="Mottagui-Tabar S."/>
            <person name="Mulder N."/>
            <person name="Nakano N."/>
            <person name="Nakauchi H."/>
            <person name="Ng P."/>
            <person name="Nilsson R."/>
            <person name="Nishiguchi S."/>
            <person name="Nishikawa S."/>
            <person name="Nori F."/>
            <person name="Ohara O."/>
            <person name="Okazaki Y."/>
            <person name="Orlando V."/>
            <person name="Pang K.C."/>
            <person name="Pavan W.J."/>
            <person name="Pavesi G."/>
            <person name="Pesole G."/>
            <person name="Petrovsky N."/>
            <person name="Piazza S."/>
            <person name="Reed J."/>
            <person name="Reid J.F."/>
            <person name="Ring B.Z."/>
            <person name="Ringwald M."/>
            <person name="Rost B."/>
            <person name="Ruan Y."/>
            <person name="Salzberg S.L."/>
            <person name="Sandelin A."/>
            <person name="Schneider C."/>
            <person name="Schoenbach C."/>
            <person name="Sekiguchi K."/>
            <person name="Semple C.A."/>
            <person name="Seno S."/>
            <person name="Sessa L."/>
            <person name="Sheng Y."/>
            <person name="Shibata Y."/>
            <person name="Shimada H."/>
            <person name="Shimada K."/>
            <person name="Silva D."/>
            <person name="Sinclair B."/>
            <person name="Sperling S."/>
            <person name="Stupka E."/>
            <person name="Sugiura K."/>
            <person name="Sultana R."/>
            <person name="Takenaka Y."/>
            <person name="Taki K."/>
            <person name="Tammoja K."/>
            <person name="Tan S.L."/>
            <person name="Tang S."/>
            <person name="Taylor M.S."/>
            <person name="Tegner J."/>
            <person name="Teichmann S.A."/>
            <person name="Ueda H.R."/>
            <person name="van Nimwegen E."/>
            <person name="Verardo R."/>
            <person name="Wei C.L."/>
            <person name="Yagi K."/>
            <person name="Yamanishi H."/>
            <person name="Zabarovsky E."/>
            <person name="Zhu S."/>
            <person name="Zimmer A."/>
            <person name="Hide W."/>
            <person name="Bult C."/>
            <person name="Grimmond S.M."/>
            <person name="Teasdale R.D."/>
            <person name="Liu E.T."/>
            <person name="Brusic V."/>
            <person name="Quackenbush J."/>
            <person name="Wahlestedt C."/>
            <person name="Mattick J.S."/>
            <person name="Hume D.A."/>
            <person name="Kai C."/>
            <person name="Sasaki D."/>
            <person name="Tomaru Y."/>
            <person name="Fukuda S."/>
            <person name="Kanamori-Katayama M."/>
            <person name="Suzuki M."/>
            <person name="Aoki J."/>
            <person name="Arakawa T."/>
            <person name="Iida J."/>
            <person name="Imamura K."/>
            <person name="Itoh M."/>
            <person name="Kato T."/>
            <person name="Kawaji H."/>
            <person name="Kawagashira N."/>
            <person name="Kawashima T."/>
            <person name="Kojima M."/>
            <person name="Kondo S."/>
            <person name="Konno H."/>
            <person name="Nakano K."/>
            <person name="Ninomiya N."/>
            <person name="Nishio T."/>
            <person name="Okada M."/>
            <person name="Plessy C."/>
            <person name="Shibata K."/>
            <person name="Shiraki T."/>
            <person name="Suzuki S."/>
            <person name="Tagami M."/>
            <person name="Waki K."/>
            <person name="Watahiki A."/>
            <person name="Okamura-Oho Y."/>
            <person name="Suzuki H."/>
            <person name="Kawai J."/>
            <person name="Hayashizaki Y."/>
        </authorList>
    </citation>
    <scope>NUCLEOTIDE SEQUENCE [LARGE SCALE MRNA] (ISOFORM 2)</scope>
    <source>
        <strain>C57BL/6J</strain>
        <tissue>Spinal ganglion</tissue>
    </source>
</reference>
<reference key="3">
    <citation type="journal article" date="2004" name="Genome Res.">
        <title>The status, quality, and expansion of the NIH full-length cDNA project: the Mammalian Gene Collection (MGC).</title>
        <authorList>
            <consortium name="The MGC Project Team"/>
        </authorList>
    </citation>
    <scope>NUCLEOTIDE SEQUENCE [LARGE SCALE MRNA] (ISOFORM 1)</scope>
    <source>
        <tissue>Brain</tissue>
    </source>
</reference>
<reference key="4">
    <citation type="journal article" date="2009" name="Immunity">
        <title>The phagosomal proteome in interferon-gamma-activated macrophages.</title>
        <authorList>
            <person name="Trost M."/>
            <person name="English L."/>
            <person name="Lemieux S."/>
            <person name="Courcelles M."/>
            <person name="Desjardins M."/>
            <person name="Thibault P."/>
        </authorList>
    </citation>
    <scope>PHOSPHORYLATION [LARGE SCALE ANALYSIS] AT THR-732</scope>
    <scope>IDENTIFICATION BY MASS SPECTROMETRY [LARGE SCALE ANALYSIS]</scope>
</reference>
<reference key="5">
    <citation type="journal article" date="2010" name="Cell">
        <title>A tissue-specific atlas of mouse protein phosphorylation and expression.</title>
        <authorList>
            <person name="Huttlin E.L."/>
            <person name="Jedrychowski M.P."/>
            <person name="Elias J.E."/>
            <person name="Goswami T."/>
            <person name="Rad R."/>
            <person name="Beausoleil S.A."/>
            <person name="Villen J."/>
            <person name="Haas W."/>
            <person name="Sowa M.E."/>
            <person name="Gygi S.P."/>
        </authorList>
    </citation>
    <scope>IDENTIFICATION BY MASS SPECTROMETRY [LARGE SCALE ANALYSIS]</scope>
    <source>
        <tissue>Spleen</tissue>
    </source>
</reference>
<comment type="function">
    <text evidence="6">Promotes the formation of filopodia. May activate CDC42, a member of the Ras-like family of Rho- and Rac proteins, by exchanging bound GDP for free GTP. Plays a role in regulating the actin cytoskeleton and cell shape.</text>
</comment>
<comment type="subcellular location">
    <subcellularLocation>
        <location evidence="8">Cytoplasm</location>
    </subcellularLocation>
    <subcellularLocation>
        <location evidence="8">Cytoplasm</location>
        <location evidence="8">Cytoskeleton</location>
    </subcellularLocation>
</comment>
<comment type="alternative products">
    <event type="alternative splicing"/>
    <isoform>
        <id>O88842-1</id>
        <name>1</name>
        <sequence type="displayed"/>
    </isoform>
    <isoform>
        <id>O88842-2</id>
        <name>2</name>
        <sequence type="described" ref="VSP_013076 VSP_013077"/>
    </isoform>
</comment>
<comment type="tissue specificity">
    <text evidence="6">Detected in adult brain, spleen, lung and skeletal muscle. Detected in embryos from 7 dpc to 17 dpc.</text>
</comment>
<accession>O88842</accession>
<accession>A2RT26</accession>
<accession>Q8BQ72</accession>
<dbReference type="EMBL" id="AF017369">
    <property type="protein sequence ID" value="AAC35431.1"/>
    <property type="molecule type" value="mRNA"/>
</dbReference>
<dbReference type="EMBL" id="AK051395">
    <property type="protein sequence ID" value="BAC34624.1"/>
    <property type="molecule type" value="mRNA"/>
</dbReference>
<dbReference type="EMBL" id="BC132340">
    <property type="protein sequence ID" value="AAI32341.1"/>
    <property type="molecule type" value="mRNA"/>
</dbReference>
<dbReference type="EMBL" id="BC137954">
    <property type="protein sequence ID" value="AAI37955.1"/>
    <property type="molecule type" value="mRNA"/>
</dbReference>
<dbReference type="CCDS" id="CCDS26499.1">
    <molecule id="O88842-1"/>
</dbReference>
<dbReference type="SMR" id="O88842"/>
<dbReference type="FunCoup" id="O88842">
    <property type="interactions" value="498"/>
</dbReference>
<dbReference type="STRING" id="10090.ENSMUSP00000105714"/>
<dbReference type="GlyGen" id="O88842">
    <property type="glycosylation" value="1 site"/>
</dbReference>
<dbReference type="iPTMnet" id="O88842"/>
<dbReference type="PhosphoSitePlus" id="O88842"/>
<dbReference type="jPOST" id="O88842"/>
<dbReference type="PaxDb" id="10090-ENSMUSP00000105714"/>
<dbReference type="PeptideAtlas" id="O88842"/>
<dbReference type="ProteomicsDB" id="271748">
    <molecule id="O88842-1"/>
</dbReference>
<dbReference type="ProteomicsDB" id="271749">
    <molecule id="O88842-2"/>
</dbReference>
<dbReference type="Pumba" id="O88842"/>
<dbReference type="AGR" id="MGI:1353657"/>
<dbReference type="MGI" id="MGI:1353657">
    <property type="gene designation" value="Fgd3"/>
</dbReference>
<dbReference type="eggNOG" id="KOG4424">
    <property type="taxonomic scope" value="Eukaryota"/>
</dbReference>
<dbReference type="InParanoid" id="O88842"/>
<dbReference type="PhylomeDB" id="O88842"/>
<dbReference type="Reactome" id="R-MMU-193648">
    <property type="pathway name" value="NRAGE signals death through JNK"/>
</dbReference>
<dbReference type="Reactome" id="R-MMU-416482">
    <property type="pathway name" value="G alpha (12/13) signalling events"/>
</dbReference>
<dbReference type="Reactome" id="R-MMU-9013148">
    <property type="pathway name" value="CDC42 GTPase cycle"/>
</dbReference>
<dbReference type="ChiTaRS" id="Fgd3">
    <property type="organism name" value="mouse"/>
</dbReference>
<dbReference type="PRO" id="PR:O88842"/>
<dbReference type="Proteomes" id="UP000000589">
    <property type="component" value="Unplaced"/>
</dbReference>
<dbReference type="RNAct" id="O88842">
    <property type="molecule type" value="protein"/>
</dbReference>
<dbReference type="GO" id="GO:0005737">
    <property type="term" value="C:cytoplasm"/>
    <property type="evidence" value="ECO:0007669"/>
    <property type="project" value="UniProtKB-SubCell"/>
</dbReference>
<dbReference type="GO" id="GO:0005856">
    <property type="term" value="C:cytoskeleton"/>
    <property type="evidence" value="ECO:0007669"/>
    <property type="project" value="UniProtKB-SubCell"/>
</dbReference>
<dbReference type="GO" id="GO:0005085">
    <property type="term" value="F:guanyl-nucleotide exchange factor activity"/>
    <property type="evidence" value="ECO:0007669"/>
    <property type="project" value="UniProtKB-KW"/>
</dbReference>
<dbReference type="GO" id="GO:0008270">
    <property type="term" value="F:zinc ion binding"/>
    <property type="evidence" value="ECO:0007669"/>
    <property type="project" value="UniProtKB-KW"/>
</dbReference>
<dbReference type="GO" id="GO:0046847">
    <property type="term" value="P:filopodium assembly"/>
    <property type="evidence" value="ECO:0000314"/>
    <property type="project" value="UniProtKB"/>
</dbReference>
<dbReference type="CDD" id="cd15740">
    <property type="entry name" value="FYVE_FGD3"/>
    <property type="match status" value="1"/>
</dbReference>
<dbReference type="CDD" id="cd13236">
    <property type="entry name" value="PH2_FGD1-4"/>
    <property type="match status" value="1"/>
</dbReference>
<dbReference type="CDD" id="cd00160">
    <property type="entry name" value="RhoGEF"/>
    <property type="match status" value="1"/>
</dbReference>
<dbReference type="FunFam" id="3.30.40.10:FF:000544">
    <property type="entry name" value="FYVE, RhoGEF and PH domain containing 3"/>
    <property type="match status" value="1"/>
</dbReference>
<dbReference type="FunFam" id="2.30.29.30:FF:000401">
    <property type="entry name" value="FYVE, RhoGEF and PH domain-containing protein 3"/>
    <property type="match status" value="1"/>
</dbReference>
<dbReference type="FunFam" id="1.20.900.10:FF:000013">
    <property type="entry name" value="FYVE, RhoGEF and PH domain-containing protein 4"/>
    <property type="match status" value="1"/>
</dbReference>
<dbReference type="Gene3D" id="1.20.900.10">
    <property type="entry name" value="Dbl homology (DH) domain"/>
    <property type="match status" value="1"/>
</dbReference>
<dbReference type="Gene3D" id="2.30.29.30">
    <property type="entry name" value="Pleckstrin-homology domain (PH domain)/Phosphotyrosine-binding domain (PTB)"/>
    <property type="match status" value="2"/>
</dbReference>
<dbReference type="Gene3D" id="3.30.40.10">
    <property type="entry name" value="Zinc/RING finger domain, C3HC4 (zinc finger)"/>
    <property type="match status" value="1"/>
</dbReference>
<dbReference type="InterPro" id="IPR035899">
    <property type="entry name" value="DBL_dom_sf"/>
</dbReference>
<dbReference type="InterPro" id="IPR000219">
    <property type="entry name" value="DH_dom"/>
</dbReference>
<dbReference type="InterPro" id="IPR035941">
    <property type="entry name" value="FGD1-4_PH2"/>
</dbReference>
<dbReference type="InterPro" id="IPR051092">
    <property type="entry name" value="FYVE_RhoGEF_PH"/>
</dbReference>
<dbReference type="InterPro" id="IPR011993">
    <property type="entry name" value="PH-like_dom_sf"/>
</dbReference>
<dbReference type="InterPro" id="IPR001849">
    <property type="entry name" value="PH_domain"/>
</dbReference>
<dbReference type="InterPro" id="IPR055251">
    <property type="entry name" value="SOS1_NGEF_PH"/>
</dbReference>
<dbReference type="InterPro" id="IPR000306">
    <property type="entry name" value="Znf_FYVE"/>
</dbReference>
<dbReference type="InterPro" id="IPR017455">
    <property type="entry name" value="Znf_FYVE-rel"/>
</dbReference>
<dbReference type="InterPro" id="IPR011011">
    <property type="entry name" value="Znf_FYVE_PHD"/>
</dbReference>
<dbReference type="InterPro" id="IPR013083">
    <property type="entry name" value="Znf_RING/FYVE/PHD"/>
</dbReference>
<dbReference type="PANTHER" id="PTHR12673">
    <property type="entry name" value="FACIOGENITAL DYSPLASIA PROTEIN"/>
    <property type="match status" value="1"/>
</dbReference>
<dbReference type="PANTHER" id="PTHR12673:SF14">
    <property type="entry name" value="FYVE, RHOGEF AND PH DOMAIN-CONTAINING PROTEIN 3"/>
    <property type="match status" value="1"/>
</dbReference>
<dbReference type="Pfam" id="PF01363">
    <property type="entry name" value="FYVE"/>
    <property type="match status" value="1"/>
</dbReference>
<dbReference type="Pfam" id="PF00621">
    <property type="entry name" value="RhoGEF"/>
    <property type="match status" value="1"/>
</dbReference>
<dbReference type="Pfam" id="PF22697">
    <property type="entry name" value="SOS1_NGEF_PH"/>
    <property type="match status" value="1"/>
</dbReference>
<dbReference type="SMART" id="SM00064">
    <property type="entry name" value="FYVE"/>
    <property type="match status" value="1"/>
</dbReference>
<dbReference type="SMART" id="SM00233">
    <property type="entry name" value="PH"/>
    <property type="match status" value="2"/>
</dbReference>
<dbReference type="SMART" id="SM00325">
    <property type="entry name" value="RhoGEF"/>
    <property type="match status" value="1"/>
</dbReference>
<dbReference type="SUPFAM" id="SSF48065">
    <property type="entry name" value="DBL homology domain (DH-domain)"/>
    <property type="match status" value="1"/>
</dbReference>
<dbReference type="SUPFAM" id="SSF57903">
    <property type="entry name" value="FYVE/PHD zinc finger"/>
    <property type="match status" value="1"/>
</dbReference>
<dbReference type="SUPFAM" id="SSF50729">
    <property type="entry name" value="PH domain-like"/>
    <property type="match status" value="2"/>
</dbReference>
<dbReference type="PROSITE" id="PS50010">
    <property type="entry name" value="DH_2"/>
    <property type="match status" value="1"/>
</dbReference>
<dbReference type="PROSITE" id="PS50003">
    <property type="entry name" value="PH_DOMAIN"/>
    <property type="match status" value="2"/>
</dbReference>
<dbReference type="PROSITE" id="PS50178">
    <property type="entry name" value="ZF_FYVE"/>
    <property type="match status" value="1"/>
</dbReference>
<organism>
    <name type="scientific">Mus musculus</name>
    <name type="common">Mouse</name>
    <dbReference type="NCBI Taxonomy" id="10090"/>
    <lineage>
        <taxon>Eukaryota</taxon>
        <taxon>Metazoa</taxon>
        <taxon>Chordata</taxon>
        <taxon>Craniata</taxon>
        <taxon>Vertebrata</taxon>
        <taxon>Euteleostomi</taxon>
        <taxon>Mammalia</taxon>
        <taxon>Eutheria</taxon>
        <taxon>Euarchontoglires</taxon>
        <taxon>Glires</taxon>
        <taxon>Rodentia</taxon>
        <taxon>Myomorpha</taxon>
        <taxon>Muroidea</taxon>
        <taxon>Muridae</taxon>
        <taxon>Murinae</taxon>
        <taxon>Mus</taxon>
        <taxon>Mus</taxon>
    </lineage>
</organism>
<gene>
    <name type="primary">Fgd3</name>
</gene>